<comment type="function">
    <text evidence="1">One of the essential components for the initiation of protein synthesis. Stabilizes the binding of IF-2 and IF-3 on the 30S subunit to which N-formylmethionyl-tRNA(fMet) subsequently binds. Helps modulate mRNA selection, yielding the 30S pre-initiation complex (PIC). Upon addition of the 50S ribosomal subunit IF-1, IF-2 and IF-3 are released leaving the mature 70S translation initiation complex.</text>
</comment>
<comment type="subunit">
    <text evidence="1">Component of the 30S ribosomal translation pre-initiation complex which assembles on the 30S ribosome in the order IF-2 and IF-3, IF-1 and N-formylmethionyl-tRNA(fMet); mRNA recruitment can occur at any time during PIC assembly.</text>
</comment>
<comment type="subcellular location">
    <subcellularLocation>
        <location evidence="1">Cytoplasm</location>
    </subcellularLocation>
</comment>
<comment type="similarity">
    <text evidence="1">Belongs to the IF-1 family.</text>
</comment>
<organism>
    <name type="scientific">Clostridium kluyveri (strain ATCC 8527 / DSM 555 / NBRC 12016 / NCIMB 10680 / K1)</name>
    <dbReference type="NCBI Taxonomy" id="431943"/>
    <lineage>
        <taxon>Bacteria</taxon>
        <taxon>Bacillati</taxon>
        <taxon>Bacillota</taxon>
        <taxon>Clostridia</taxon>
        <taxon>Eubacteriales</taxon>
        <taxon>Clostridiaceae</taxon>
        <taxon>Clostridium</taxon>
    </lineage>
</organism>
<protein>
    <recommendedName>
        <fullName evidence="1">Translation initiation factor IF-1</fullName>
    </recommendedName>
</protein>
<proteinExistence type="inferred from homology"/>
<name>IF1_CLOK5</name>
<keyword id="KW-0963">Cytoplasm</keyword>
<keyword id="KW-0396">Initiation factor</keyword>
<keyword id="KW-0648">Protein biosynthesis</keyword>
<keyword id="KW-1185">Reference proteome</keyword>
<keyword id="KW-0694">RNA-binding</keyword>
<keyword id="KW-0699">rRNA-binding</keyword>
<gene>
    <name evidence="1" type="primary">infA</name>
    <name type="ordered locus">CKL_0247</name>
</gene>
<accession>A5N4S0</accession>
<dbReference type="EMBL" id="CP000673">
    <property type="protein sequence ID" value="EDK32301.1"/>
    <property type="molecule type" value="Genomic_DNA"/>
</dbReference>
<dbReference type="RefSeq" id="WP_011988826.1">
    <property type="nucleotide sequence ID" value="NC_009706.1"/>
</dbReference>
<dbReference type="SMR" id="A5N4S0"/>
<dbReference type="STRING" id="431943.CKL_0247"/>
<dbReference type="KEGG" id="ckl:CKL_0247"/>
<dbReference type="eggNOG" id="COG0361">
    <property type="taxonomic scope" value="Bacteria"/>
</dbReference>
<dbReference type="HOGENOM" id="CLU_151267_1_0_9"/>
<dbReference type="Proteomes" id="UP000002411">
    <property type="component" value="Chromosome"/>
</dbReference>
<dbReference type="GO" id="GO:0005829">
    <property type="term" value="C:cytosol"/>
    <property type="evidence" value="ECO:0007669"/>
    <property type="project" value="TreeGrafter"/>
</dbReference>
<dbReference type="GO" id="GO:0043022">
    <property type="term" value="F:ribosome binding"/>
    <property type="evidence" value="ECO:0007669"/>
    <property type="project" value="UniProtKB-UniRule"/>
</dbReference>
<dbReference type="GO" id="GO:0019843">
    <property type="term" value="F:rRNA binding"/>
    <property type="evidence" value="ECO:0007669"/>
    <property type="project" value="UniProtKB-UniRule"/>
</dbReference>
<dbReference type="GO" id="GO:0003743">
    <property type="term" value="F:translation initiation factor activity"/>
    <property type="evidence" value="ECO:0007669"/>
    <property type="project" value="UniProtKB-UniRule"/>
</dbReference>
<dbReference type="CDD" id="cd04451">
    <property type="entry name" value="S1_IF1"/>
    <property type="match status" value="1"/>
</dbReference>
<dbReference type="FunFam" id="2.40.50.140:FF:000002">
    <property type="entry name" value="Translation initiation factor IF-1"/>
    <property type="match status" value="1"/>
</dbReference>
<dbReference type="Gene3D" id="2.40.50.140">
    <property type="entry name" value="Nucleic acid-binding proteins"/>
    <property type="match status" value="1"/>
</dbReference>
<dbReference type="HAMAP" id="MF_00075">
    <property type="entry name" value="IF_1"/>
    <property type="match status" value="1"/>
</dbReference>
<dbReference type="InterPro" id="IPR012340">
    <property type="entry name" value="NA-bd_OB-fold"/>
</dbReference>
<dbReference type="InterPro" id="IPR006196">
    <property type="entry name" value="RNA-binding_domain_S1_IF1"/>
</dbReference>
<dbReference type="InterPro" id="IPR003029">
    <property type="entry name" value="S1_domain"/>
</dbReference>
<dbReference type="InterPro" id="IPR004368">
    <property type="entry name" value="TIF_IF1"/>
</dbReference>
<dbReference type="NCBIfam" id="TIGR00008">
    <property type="entry name" value="infA"/>
    <property type="match status" value="1"/>
</dbReference>
<dbReference type="PANTHER" id="PTHR33370">
    <property type="entry name" value="TRANSLATION INITIATION FACTOR IF-1, CHLOROPLASTIC"/>
    <property type="match status" value="1"/>
</dbReference>
<dbReference type="PANTHER" id="PTHR33370:SF1">
    <property type="entry name" value="TRANSLATION INITIATION FACTOR IF-1, CHLOROPLASTIC"/>
    <property type="match status" value="1"/>
</dbReference>
<dbReference type="Pfam" id="PF01176">
    <property type="entry name" value="eIF-1a"/>
    <property type="match status" value="1"/>
</dbReference>
<dbReference type="SMART" id="SM00316">
    <property type="entry name" value="S1"/>
    <property type="match status" value="1"/>
</dbReference>
<dbReference type="SUPFAM" id="SSF50249">
    <property type="entry name" value="Nucleic acid-binding proteins"/>
    <property type="match status" value="1"/>
</dbReference>
<dbReference type="PROSITE" id="PS50832">
    <property type="entry name" value="S1_IF1_TYPE"/>
    <property type="match status" value="1"/>
</dbReference>
<feature type="chain" id="PRO_0000338806" description="Translation initiation factor IF-1">
    <location>
        <begin position="1"/>
        <end position="72"/>
    </location>
</feature>
<feature type="domain" description="S1-like" evidence="1">
    <location>
        <begin position="1"/>
        <end position="72"/>
    </location>
</feature>
<reference key="1">
    <citation type="journal article" date="2008" name="Proc. Natl. Acad. Sci. U.S.A.">
        <title>The genome of Clostridium kluyveri, a strict anaerobe with unique metabolic features.</title>
        <authorList>
            <person name="Seedorf H."/>
            <person name="Fricke W.F."/>
            <person name="Veith B."/>
            <person name="Brueggemann H."/>
            <person name="Liesegang H."/>
            <person name="Strittmatter A."/>
            <person name="Miethke M."/>
            <person name="Buckel W."/>
            <person name="Hinderberger J."/>
            <person name="Li F."/>
            <person name="Hagemeier C."/>
            <person name="Thauer R.K."/>
            <person name="Gottschalk G."/>
        </authorList>
    </citation>
    <scope>NUCLEOTIDE SEQUENCE [LARGE SCALE GENOMIC DNA]</scope>
    <source>
        <strain>ATCC 8527 / DSM 555 / NBRC 12016 / NCIMB 10680 / K1</strain>
    </source>
</reference>
<evidence type="ECO:0000255" key="1">
    <source>
        <dbReference type="HAMAP-Rule" id="MF_00075"/>
    </source>
</evidence>
<sequence>MSKDDVIEMQGTVLEALPNAMFEVELESGHKILAHISGKLRMNFIRILPGDKVTVELSPYDLTRGRITWRAK</sequence>